<gene>
    <name type="primary">Cacng7</name>
</gene>
<comment type="function">
    <text evidence="2 6 7">Regulates the activity of L-type calcium channels that contain CACNA1C as pore-forming subunit (By similarity). Regulates the trafficking and gating properties of AMPA-selective glutamate receptors (AMPARs). Promotes their targeting to the cell membrane and synapses and modulates their gating properties by slowing their rates of activation, deactivation and desensitization and by mediating their resensitization (PubMed:18817736, PubMed:19234459). Shows specificity only for GRIA1 and GRIA2 (By similarity).</text>
</comment>
<comment type="subunit">
    <text evidence="2 7 8">Interacts with CACNA1C. Identified in a complex with the L-type calcium channel subunits CACNA1C, CACNA2D1 and either CACNB1 or CACNB2 (By similarity). Acts as an auxiliary subunit for AMPA-selective glutamate receptors (AMPARs), such as GRIA1 and GRIA2 (PubMed:19234459, PubMed:19265014).</text>
</comment>
<comment type="subcellular location">
    <subcellularLocation>
        <location evidence="9">Cell membrane</location>
        <topology evidence="1">Multi-pass membrane protein</topology>
    </subcellularLocation>
</comment>
<comment type="tissue specificity">
    <text evidence="5">Expressed in brain, heart, lung and testis.</text>
</comment>
<comment type="similarity">
    <text evidence="9">Belongs to the PMP-22/EMP/MP20 family. CACNG subfamily.</text>
</comment>
<keyword id="KW-0106">Calcium</keyword>
<keyword id="KW-0107">Calcium channel</keyword>
<keyword id="KW-0109">Calcium transport</keyword>
<keyword id="KW-1003">Cell membrane</keyword>
<keyword id="KW-0407">Ion channel</keyword>
<keyword id="KW-0406">Ion transport</keyword>
<keyword id="KW-0472">Membrane</keyword>
<keyword id="KW-0597">Phosphoprotein</keyword>
<keyword id="KW-1185">Reference proteome</keyword>
<keyword id="KW-0812">Transmembrane</keyword>
<keyword id="KW-1133">Transmembrane helix</keyword>
<keyword id="KW-0813">Transport</keyword>
<keyword id="KW-0851">Voltage-gated channel</keyword>
<reference key="1">
    <citation type="journal article" date="2001" name="Gene">
        <title>Calcium channel gamma subunits provide insights into the evolution of this gene family.</title>
        <authorList>
            <person name="Chu P.-J."/>
            <person name="Robertson H.M."/>
            <person name="Best P.M."/>
        </authorList>
    </citation>
    <scope>NUCLEOTIDE SEQUENCE [MRNA]</scope>
    <scope>TISSUE SPECIFICITY</scope>
    <source>
        <strain>Sprague-Dawley</strain>
    </source>
</reference>
<reference key="2">
    <citation type="journal article" date="2008" name="Neuron">
        <title>AMPA receptor subunit-specific regulation by a distinct family of type II TARPs.</title>
        <authorList>
            <person name="Kato A.S."/>
            <person name="Siuda E.R."/>
            <person name="Nisenbaum E.S."/>
            <person name="Bredt D.S."/>
        </authorList>
    </citation>
    <scope>FUNCTION</scope>
</reference>
<reference key="3">
    <citation type="journal article" date="2009" name="Nat. Neurosci.">
        <title>Selective regulation of long-form calcium-permeable AMPA receptors by an atypical TARP, gamma-5.</title>
        <authorList>
            <person name="Soto D."/>
            <person name="Coombs I.D."/>
            <person name="Renzi M."/>
            <person name="Zonouzi M."/>
            <person name="Farrant M."/>
            <person name="Cull-Candy S.G."/>
        </authorList>
    </citation>
    <scope>FUNCTION</scope>
    <scope>SUBUNIT</scope>
</reference>
<reference key="4">
    <citation type="journal article" date="2009" name="Nat. Neurosci.">
        <authorList>
            <person name="Soto D."/>
            <person name="Coombs I.D."/>
            <person name="Renzi M."/>
            <person name="Zonouzi M."/>
            <person name="Farrant M."/>
            <person name="Cull-Candy S.G."/>
        </authorList>
    </citation>
    <scope>ERRATUM OF PUBMED:19234459</scope>
</reference>
<reference key="5">
    <citation type="journal article" date="2009" name="Science">
        <title>Functional proteomics identify cornichon proteins as auxiliary subunits of AMPA receptors.</title>
        <authorList>
            <person name="Schwenk J."/>
            <person name="Harmel N."/>
            <person name="Zolles G."/>
            <person name="Bildl W."/>
            <person name="Kulik A."/>
            <person name="Heimrich B."/>
            <person name="Chisaka O."/>
            <person name="Jonas P."/>
            <person name="Schulte U."/>
            <person name="Fakler B."/>
            <person name="Kloecker N."/>
        </authorList>
    </citation>
    <scope>SUBUNIT</scope>
    <scope>IDENTIFICATION BY MASS SPECTROMETRY</scope>
</reference>
<reference key="6">
    <citation type="journal article" date="2011" name="FASEB J.">
        <title>Cardiac L-type calcium channel (Cav1.2) associates with gamma subunits.</title>
        <authorList>
            <person name="Yang L."/>
            <person name="Katchman A."/>
            <person name="Morrow J.P."/>
            <person name="Doshi D."/>
            <person name="Marx S.O."/>
        </authorList>
    </citation>
    <scope>TISSUE SPECIFICITY</scope>
</reference>
<reference key="7">
    <citation type="journal article" date="2012" name="Nat. Commun.">
        <title>Quantitative maps of protein phosphorylation sites across 14 different rat organs and tissues.</title>
        <authorList>
            <person name="Lundby A."/>
            <person name="Secher A."/>
            <person name="Lage K."/>
            <person name="Nordsborg N.B."/>
            <person name="Dmytriyev A."/>
            <person name="Lundby C."/>
            <person name="Olsen J.V."/>
        </authorList>
    </citation>
    <scope>IDENTIFICATION BY MASS SPECTROMETRY [LARGE SCALE ANALYSIS]</scope>
</reference>
<dbReference type="EMBL" id="AF361345">
    <property type="protein sequence ID" value="AAL50040.1"/>
    <property type="molecule type" value="mRNA"/>
</dbReference>
<dbReference type="RefSeq" id="NP_542426.1">
    <property type="nucleotide sequence ID" value="NM_080695.2"/>
</dbReference>
<dbReference type="RefSeq" id="XP_006228075.1">
    <property type="nucleotide sequence ID" value="XM_006228013.3"/>
</dbReference>
<dbReference type="SMR" id="P62957"/>
<dbReference type="CORUM" id="P62957"/>
<dbReference type="FunCoup" id="P62957">
    <property type="interactions" value="1688"/>
</dbReference>
<dbReference type="STRING" id="10116.ENSRNOP00000069074"/>
<dbReference type="iPTMnet" id="P62957"/>
<dbReference type="PhosphoSitePlus" id="P62957"/>
<dbReference type="PaxDb" id="10116-ENSRNOP00000019683"/>
<dbReference type="Ensembl" id="ENSRNOT00000089944.2">
    <property type="protein sequence ID" value="ENSRNOP00000069074.1"/>
    <property type="gene ID" value="ENSRNOG00000056257.2"/>
</dbReference>
<dbReference type="GeneID" id="140728"/>
<dbReference type="KEGG" id="rno:140728"/>
<dbReference type="UCSC" id="RGD:628807">
    <property type="organism name" value="rat"/>
</dbReference>
<dbReference type="AGR" id="RGD:628807"/>
<dbReference type="CTD" id="59284"/>
<dbReference type="RGD" id="628807">
    <property type="gene designation" value="Cacng7"/>
</dbReference>
<dbReference type="eggNOG" id="ENOG502QTQ7">
    <property type="taxonomic scope" value="Eukaryota"/>
</dbReference>
<dbReference type="GeneTree" id="ENSGT01050000244961"/>
<dbReference type="HOGENOM" id="CLU_053704_1_1_1"/>
<dbReference type="InParanoid" id="P62957"/>
<dbReference type="OMA" id="QCISIDY"/>
<dbReference type="OrthoDB" id="5917530at2759"/>
<dbReference type="PhylomeDB" id="P62957"/>
<dbReference type="TreeFam" id="TF327980"/>
<dbReference type="Reactome" id="R-RNO-5576892">
    <property type="pathway name" value="Phase 0 - rapid depolarisation"/>
</dbReference>
<dbReference type="Reactome" id="R-RNO-5576893">
    <property type="pathway name" value="Phase 2 - plateau phase"/>
</dbReference>
<dbReference type="PRO" id="PR:P62957"/>
<dbReference type="Proteomes" id="UP000002494">
    <property type="component" value="Chromosome 1"/>
</dbReference>
<dbReference type="Bgee" id="ENSRNOG00000056257">
    <property type="expression patterns" value="Expressed in cerebellum and 12 other cell types or tissues"/>
</dbReference>
<dbReference type="GO" id="GO:0032281">
    <property type="term" value="C:AMPA glutamate receptor complex"/>
    <property type="evidence" value="ECO:0000314"/>
    <property type="project" value="UniProtKB"/>
</dbReference>
<dbReference type="GO" id="GO:0044300">
    <property type="term" value="C:cerebellar mossy fiber"/>
    <property type="evidence" value="ECO:0000314"/>
    <property type="project" value="RGD"/>
</dbReference>
<dbReference type="GO" id="GO:0005769">
    <property type="term" value="C:early endosome"/>
    <property type="evidence" value="ECO:0000314"/>
    <property type="project" value="RGD"/>
</dbReference>
<dbReference type="GO" id="GO:0098978">
    <property type="term" value="C:glutamatergic synapse"/>
    <property type="evidence" value="ECO:0000314"/>
    <property type="project" value="SynGO"/>
</dbReference>
<dbReference type="GO" id="GO:1990454">
    <property type="term" value="C:L-type voltage-gated calcium channel complex"/>
    <property type="evidence" value="ECO:0000250"/>
    <property type="project" value="UniProtKB"/>
</dbReference>
<dbReference type="GO" id="GO:0043025">
    <property type="term" value="C:neuronal cell body"/>
    <property type="evidence" value="ECO:0000314"/>
    <property type="project" value="RGD"/>
</dbReference>
<dbReference type="GO" id="GO:0098839">
    <property type="term" value="C:postsynaptic density membrane"/>
    <property type="evidence" value="ECO:0000314"/>
    <property type="project" value="SynGO"/>
</dbReference>
<dbReference type="GO" id="GO:0005246">
    <property type="term" value="F:calcium channel regulator activity"/>
    <property type="evidence" value="ECO:0000250"/>
    <property type="project" value="UniProtKB"/>
</dbReference>
<dbReference type="GO" id="GO:0016247">
    <property type="term" value="F:channel regulator activity"/>
    <property type="evidence" value="ECO:0000318"/>
    <property type="project" value="GO_Central"/>
</dbReference>
<dbReference type="GO" id="GO:0005245">
    <property type="term" value="F:voltage-gated calcium channel activity"/>
    <property type="evidence" value="ECO:0000318"/>
    <property type="project" value="GO_Central"/>
</dbReference>
<dbReference type="GO" id="GO:0099645">
    <property type="term" value="P:neurotransmitter receptor localization to postsynaptic specialization membrane"/>
    <property type="evidence" value="ECO:0000266"/>
    <property type="project" value="RGD"/>
</dbReference>
<dbReference type="GO" id="GO:1903861">
    <property type="term" value="P:positive regulation of dendrite extension"/>
    <property type="evidence" value="ECO:0000315"/>
    <property type="project" value="RGD"/>
</dbReference>
<dbReference type="GO" id="GO:0051968">
    <property type="term" value="P:positive regulation of synaptic transmission, glutamatergic"/>
    <property type="evidence" value="ECO:0000318"/>
    <property type="project" value="GO_Central"/>
</dbReference>
<dbReference type="GO" id="GO:0098970">
    <property type="term" value="P:postsynaptic neurotransmitter receptor diffusion trapping"/>
    <property type="evidence" value="ECO:0000318"/>
    <property type="project" value="GO_Central"/>
</dbReference>
<dbReference type="GO" id="GO:2000311">
    <property type="term" value="P:regulation of AMPA receptor activity"/>
    <property type="evidence" value="ECO:0000314"/>
    <property type="project" value="UniProtKB"/>
</dbReference>
<dbReference type="GO" id="GO:0043488">
    <property type="term" value="P:regulation of mRNA stability"/>
    <property type="evidence" value="ECO:0000315"/>
    <property type="project" value="RGD"/>
</dbReference>
<dbReference type="GO" id="GO:0019226">
    <property type="term" value="P:transmission of nerve impulse"/>
    <property type="evidence" value="ECO:0000318"/>
    <property type="project" value="GO_Central"/>
</dbReference>
<dbReference type="FunFam" id="1.20.140.150:FF:000003">
    <property type="entry name" value="Voltage-dependent calcium channel gamma-7 subunit"/>
    <property type="match status" value="1"/>
</dbReference>
<dbReference type="Gene3D" id="1.20.140.150">
    <property type="match status" value="1"/>
</dbReference>
<dbReference type="InterPro" id="IPR051072">
    <property type="entry name" value="CACNG_subunit"/>
</dbReference>
<dbReference type="InterPro" id="IPR004031">
    <property type="entry name" value="PMP22/EMP/MP20/Claudin"/>
</dbReference>
<dbReference type="InterPro" id="IPR008371">
    <property type="entry name" value="VDCC_g7su"/>
</dbReference>
<dbReference type="InterPro" id="IPR008368">
    <property type="entry name" value="VDCC_gsu"/>
</dbReference>
<dbReference type="PANTHER" id="PTHR12107">
    <property type="entry name" value="VOLTAGE-DEPENDENT CALCIUM CHANNEL GAMMA SUBUNIT"/>
    <property type="match status" value="1"/>
</dbReference>
<dbReference type="PANTHER" id="PTHR12107:SF12">
    <property type="entry name" value="VOLTAGE-DEPENDENT CALCIUM CHANNEL GAMMA-7 SUBUNIT"/>
    <property type="match status" value="1"/>
</dbReference>
<dbReference type="Pfam" id="PF13903">
    <property type="entry name" value="Claudin_2"/>
    <property type="match status" value="1"/>
</dbReference>
<dbReference type="PRINTS" id="PR01792">
    <property type="entry name" value="VDCCGAMMA"/>
</dbReference>
<dbReference type="PRINTS" id="PR01795">
    <property type="entry name" value="VDCCGAMMA7"/>
</dbReference>
<name>CCG7_RAT</name>
<organism>
    <name type="scientific">Rattus norvegicus</name>
    <name type="common">Rat</name>
    <dbReference type="NCBI Taxonomy" id="10116"/>
    <lineage>
        <taxon>Eukaryota</taxon>
        <taxon>Metazoa</taxon>
        <taxon>Chordata</taxon>
        <taxon>Craniata</taxon>
        <taxon>Vertebrata</taxon>
        <taxon>Euteleostomi</taxon>
        <taxon>Mammalia</taxon>
        <taxon>Eutheria</taxon>
        <taxon>Euarchontoglires</taxon>
        <taxon>Glires</taxon>
        <taxon>Rodentia</taxon>
        <taxon>Myomorpha</taxon>
        <taxon>Muroidea</taxon>
        <taxon>Muridae</taxon>
        <taxon>Murinae</taxon>
        <taxon>Rattus</taxon>
    </lineage>
</organism>
<proteinExistence type="evidence at protein level"/>
<accession>P62957</accession>
<accession>Q8VBX3</accession>
<accession>Q8WXS6</accession>
<accession>Q9BXT1</accession>
<feature type="chain" id="PRO_0000164689" description="Voltage-dependent calcium channel gamma-7 subunit">
    <location>
        <begin position="1"/>
        <end position="275"/>
    </location>
</feature>
<feature type="transmembrane region" description="Helical" evidence="4">
    <location>
        <begin position="8"/>
        <end position="28"/>
    </location>
</feature>
<feature type="transmembrane region" description="Helical" evidence="4">
    <location>
        <begin position="103"/>
        <end position="123"/>
    </location>
</feature>
<feature type="transmembrane region" description="Helical" evidence="4">
    <location>
        <begin position="129"/>
        <end position="149"/>
    </location>
</feature>
<feature type="transmembrane region" description="Helical" evidence="4">
    <location>
        <begin position="179"/>
        <end position="199"/>
    </location>
</feature>
<feature type="modified residue" description="Phosphoserine" evidence="3">
    <location>
        <position position="222"/>
    </location>
</feature>
<feature type="modified residue" description="Phosphoserine" evidence="3">
    <location>
        <position position="225"/>
    </location>
</feature>
<feature type="modified residue" description="Phosphoserine" evidence="3">
    <location>
        <position position="273"/>
    </location>
</feature>
<evidence type="ECO:0000250" key="1"/>
<evidence type="ECO:0000250" key="2">
    <source>
        <dbReference type="UniProtKB" id="P62955"/>
    </source>
</evidence>
<evidence type="ECO:0000250" key="3">
    <source>
        <dbReference type="UniProtKB" id="P62956"/>
    </source>
</evidence>
<evidence type="ECO:0000255" key="4"/>
<evidence type="ECO:0000269" key="5">
    <source>
    </source>
</evidence>
<evidence type="ECO:0000269" key="6">
    <source>
    </source>
</evidence>
<evidence type="ECO:0000269" key="7">
    <source>
    </source>
</evidence>
<evidence type="ECO:0000269" key="8">
    <source>
    </source>
</evidence>
<evidence type="ECO:0000305" key="9"/>
<sequence length="275" mass="31003">MSHCSSRALTLLSSVFGACGLLLVGIAVSTDYWLYMEEGTVLPQNQTTEVKMALHAGLWRVCFFAGREKGRCVASEYFLEPEINLVTENTENILKTVRTATPFPMVSLFLVFTAFVISNIGHIRPQRTILAFVSGIFFILSGLSLVVGLVLYISSINDEVMNRPSSSEQYFHYRYGWSFAFAASSFLLKEGAGVMSVYLFTKRYAEEEMYRPHPAFYRPRLSDCSDYSGQFLQPEAWRRGRSPSDISSDVSIQMTQNYPPAIKYPDHLHISTSPC</sequence>
<protein>
    <recommendedName>
        <fullName>Voltage-dependent calcium channel gamma-7 subunit</fullName>
    </recommendedName>
    <alternativeName>
        <fullName>Neuronal voltage-gated calcium channel gamma-7 subunit</fullName>
    </alternativeName>
    <alternativeName>
        <fullName>Transmembrane AMPAR regulatory protein gamma-7</fullName>
        <shortName>TARP gamma-7</shortName>
    </alternativeName>
</protein>